<keyword id="KW-0067">ATP-binding</keyword>
<keyword id="KW-0131">Cell cycle</keyword>
<keyword id="KW-0132">Cell division</keyword>
<keyword id="KW-0133">Cell shape</keyword>
<keyword id="KW-0961">Cell wall biogenesis/degradation</keyword>
<keyword id="KW-0963">Cytoplasm</keyword>
<keyword id="KW-0436">Ligase</keyword>
<keyword id="KW-0547">Nucleotide-binding</keyword>
<keyword id="KW-0573">Peptidoglycan synthesis</keyword>
<dbReference type="EC" id="6.3.2.8" evidence="1"/>
<dbReference type="EMBL" id="CP001581">
    <property type="protein sequence ID" value="ACO86812.1"/>
    <property type="molecule type" value="Genomic_DNA"/>
</dbReference>
<dbReference type="RefSeq" id="WP_012705525.1">
    <property type="nucleotide sequence ID" value="NC_012563.1"/>
</dbReference>
<dbReference type="SMR" id="C1FNF4"/>
<dbReference type="KEGG" id="cby:CLM_4040"/>
<dbReference type="eggNOG" id="COG0773">
    <property type="taxonomic scope" value="Bacteria"/>
</dbReference>
<dbReference type="HOGENOM" id="CLU_028104_1_0_9"/>
<dbReference type="UniPathway" id="UPA00219"/>
<dbReference type="Proteomes" id="UP000001374">
    <property type="component" value="Chromosome"/>
</dbReference>
<dbReference type="GO" id="GO:0005737">
    <property type="term" value="C:cytoplasm"/>
    <property type="evidence" value="ECO:0007669"/>
    <property type="project" value="UniProtKB-SubCell"/>
</dbReference>
<dbReference type="GO" id="GO:0005524">
    <property type="term" value="F:ATP binding"/>
    <property type="evidence" value="ECO:0007669"/>
    <property type="project" value="UniProtKB-UniRule"/>
</dbReference>
<dbReference type="GO" id="GO:0008763">
    <property type="term" value="F:UDP-N-acetylmuramate-L-alanine ligase activity"/>
    <property type="evidence" value="ECO:0007669"/>
    <property type="project" value="UniProtKB-UniRule"/>
</dbReference>
<dbReference type="GO" id="GO:0051301">
    <property type="term" value="P:cell division"/>
    <property type="evidence" value="ECO:0007669"/>
    <property type="project" value="UniProtKB-KW"/>
</dbReference>
<dbReference type="GO" id="GO:0071555">
    <property type="term" value="P:cell wall organization"/>
    <property type="evidence" value="ECO:0007669"/>
    <property type="project" value="UniProtKB-KW"/>
</dbReference>
<dbReference type="GO" id="GO:0009252">
    <property type="term" value="P:peptidoglycan biosynthetic process"/>
    <property type="evidence" value="ECO:0007669"/>
    <property type="project" value="UniProtKB-UniRule"/>
</dbReference>
<dbReference type="GO" id="GO:0008360">
    <property type="term" value="P:regulation of cell shape"/>
    <property type="evidence" value="ECO:0007669"/>
    <property type="project" value="UniProtKB-KW"/>
</dbReference>
<dbReference type="Gene3D" id="3.90.190.20">
    <property type="entry name" value="Mur ligase, C-terminal domain"/>
    <property type="match status" value="1"/>
</dbReference>
<dbReference type="Gene3D" id="3.40.1190.10">
    <property type="entry name" value="Mur-like, catalytic domain"/>
    <property type="match status" value="1"/>
</dbReference>
<dbReference type="Gene3D" id="3.40.50.720">
    <property type="entry name" value="NAD(P)-binding Rossmann-like Domain"/>
    <property type="match status" value="1"/>
</dbReference>
<dbReference type="HAMAP" id="MF_00046">
    <property type="entry name" value="MurC"/>
    <property type="match status" value="1"/>
</dbReference>
<dbReference type="InterPro" id="IPR036565">
    <property type="entry name" value="Mur-like_cat_sf"/>
</dbReference>
<dbReference type="InterPro" id="IPR004101">
    <property type="entry name" value="Mur_ligase_C"/>
</dbReference>
<dbReference type="InterPro" id="IPR036615">
    <property type="entry name" value="Mur_ligase_C_dom_sf"/>
</dbReference>
<dbReference type="InterPro" id="IPR013221">
    <property type="entry name" value="Mur_ligase_cen"/>
</dbReference>
<dbReference type="InterPro" id="IPR000713">
    <property type="entry name" value="Mur_ligase_N"/>
</dbReference>
<dbReference type="InterPro" id="IPR050061">
    <property type="entry name" value="MurCDEF_pg_biosynth"/>
</dbReference>
<dbReference type="InterPro" id="IPR005758">
    <property type="entry name" value="UDP-N-AcMur_Ala_ligase_MurC"/>
</dbReference>
<dbReference type="NCBIfam" id="TIGR01082">
    <property type="entry name" value="murC"/>
    <property type="match status" value="1"/>
</dbReference>
<dbReference type="PANTHER" id="PTHR43445:SF3">
    <property type="entry name" value="UDP-N-ACETYLMURAMATE--L-ALANINE LIGASE"/>
    <property type="match status" value="1"/>
</dbReference>
<dbReference type="PANTHER" id="PTHR43445">
    <property type="entry name" value="UDP-N-ACETYLMURAMATE--L-ALANINE LIGASE-RELATED"/>
    <property type="match status" value="1"/>
</dbReference>
<dbReference type="Pfam" id="PF01225">
    <property type="entry name" value="Mur_ligase"/>
    <property type="match status" value="1"/>
</dbReference>
<dbReference type="Pfam" id="PF02875">
    <property type="entry name" value="Mur_ligase_C"/>
    <property type="match status" value="1"/>
</dbReference>
<dbReference type="Pfam" id="PF08245">
    <property type="entry name" value="Mur_ligase_M"/>
    <property type="match status" value="1"/>
</dbReference>
<dbReference type="SUPFAM" id="SSF51984">
    <property type="entry name" value="MurCD N-terminal domain"/>
    <property type="match status" value="1"/>
</dbReference>
<dbReference type="SUPFAM" id="SSF53623">
    <property type="entry name" value="MurD-like peptide ligases, catalytic domain"/>
    <property type="match status" value="1"/>
</dbReference>
<dbReference type="SUPFAM" id="SSF53244">
    <property type="entry name" value="MurD-like peptide ligases, peptide-binding domain"/>
    <property type="match status" value="1"/>
</dbReference>
<comment type="function">
    <text evidence="1">Cell wall formation.</text>
</comment>
<comment type="catalytic activity">
    <reaction evidence="1">
        <text>UDP-N-acetyl-alpha-D-muramate + L-alanine + ATP = UDP-N-acetyl-alpha-D-muramoyl-L-alanine + ADP + phosphate + H(+)</text>
        <dbReference type="Rhea" id="RHEA:23372"/>
        <dbReference type="ChEBI" id="CHEBI:15378"/>
        <dbReference type="ChEBI" id="CHEBI:30616"/>
        <dbReference type="ChEBI" id="CHEBI:43474"/>
        <dbReference type="ChEBI" id="CHEBI:57972"/>
        <dbReference type="ChEBI" id="CHEBI:70757"/>
        <dbReference type="ChEBI" id="CHEBI:83898"/>
        <dbReference type="ChEBI" id="CHEBI:456216"/>
        <dbReference type="EC" id="6.3.2.8"/>
    </reaction>
</comment>
<comment type="pathway">
    <text evidence="1">Cell wall biogenesis; peptidoglycan biosynthesis.</text>
</comment>
<comment type="subcellular location">
    <subcellularLocation>
        <location evidence="1">Cytoplasm</location>
    </subcellularLocation>
</comment>
<comment type="similarity">
    <text evidence="1">Belongs to the MurCDEF family.</text>
</comment>
<sequence>MLFNFIKDKNKHIHFIGIGGISMSGLAEILLYHNFTISGSDMNSSPITKKLKDKGAHIYIGHKKENIKDADLIVYTAAIASDNPEIIEAKEKNIKLMDRADFLGDLMKGYKYNIAISGTHGKTTTTSMLSHVALKANVDPTILVGGNLDIINGNVRVGKSDFFITEACEYKSSFLKFFPYIGAILNIDADHLDYYRDLNDIKNAFSKFIKLIPKDGYLVAYGEDKNIQSIIKEANCNVITYGINSGDIQAHNIEYDEKACGNFDVVKDNQKLFSVKLNVPGKHNILNSLASICIGLASNMKCKDIIEGIESFFGTHRRFELKGCKNNITVIDDYAHHPTEISATLDAAKKYPHNKLFCVFQPHTYSRTLTLFDDFTKCFDNADEIILADIYAAREKDTGIISSDMLGDKLRDRGLKCTNFHKFDDIKNYLIENAKDGDLILTVGAGDIYKVGEMYINL</sequence>
<proteinExistence type="inferred from homology"/>
<reference key="1">
    <citation type="submission" date="2008-10" db="EMBL/GenBank/DDBJ databases">
        <title>Genome sequence of Clostridium botulinum A2 Kyoto.</title>
        <authorList>
            <person name="Shrivastava S."/>
            <person name="Brinkac L.M."/>
            <person name="Brown J.L."/>
            <person name="Bruce D."/>
            <person name="Detter C.C."/>
            <person name="Johnson E.A."/>
            <person name="Munk C.A."/>
            <person name="Smith L.A."/>
            <person name="Smith T.J."/>
            <person name="Sutton G."/>
            <person name="Brettin T.S."/>
        </authorList>
    </citation>
    <scope>NUCLEOTIDE SEQUENCE [LARGE SCALE GENOMIC DNA]</scope>
    <source>
        <strain>Kyoto / Type A2</strain>
    </source>
</reference>
<evidence type="ECO:0000255" key="1">
    <source>
        <dbReference type="HAMAP-Rule" id="MF_00046"/>
    </source>
</evidence>
<gene>
    <name evidence="1" type="primary">murC</name>
    <name type="ordered locus">CLM_4040</name>
</gene>
<protein>
    <recommendedName>
        <fullName evidence="1">UDP-N-acetylmuramate--L-alanine ligase</fullName>
        <ecNumber evidence="1">6.3.2.8</ecNumber>
    </recommendedName>
    <alternativeName>
        <fullName evidence="1">UDP-N-acetylmuramoyl-L-alanine synthetase</fullName>
    </alternativeName>
</protein>
<feature type="chain" id="PRO_1000117401" description="UDP-N-acetylmuramate--L-alanine ligase">
    <location>
        <begin position="1"/>
        <end position="458"/>
    </location>
</feature>
<feature type="binding site" evidence="1">
    <location>
        <begin position="118"/>
        <end position="124"/>
    </location>
    <ligand>
        <name>ATP</name>
        <dbReference type="ChEBI" id="CHEBI:30616"/>
    </ligand>
</feature>
<organism>
    <name type="scientific">Clostridium botulinum (strain Kyoto / Type A2)</name>
    <dbReference type="NCBI Taxonomy" id="536232"/>
    <lineage>
        <taxon>Bacteria</taxon>
        <taxon>Bacillati</taxon>
        <taxon>Bacillota</taxon>
        <taxon>Clostridia</taxon>
        <taxon>Eubacteriales</taxon>
        <taxon>Clostridiaceae</taxon>
        <taxon>Clostridium</taxon>
    </lineage>
</organism>
<accession>C1FNF4</accession>
<name>MURC_CLOBJ</name>